<keyword id="KW-0997">Cell inner membrane</keyword>
<keyword id="KW-1003">Cell membrane</keyword>
<keyword id="KW-0472">Membrane</keyword>
<keyword id="KW-1185">Reference proteome</keyword>
<keyword id="KW-0769">Symport</keyword>
<keyword id="KW-0812">Transmembrane</keyword>
<keyword id="KW-1133">Transmembrane helix</keyword>
<keyword id="KW-0813">Transport</keyword>
<name>LLDP_SALTY</name>
<proteinExistence type="inferred from homology"/>
<gene>
    <name type="primary">lldP</name>
    <name type="synonym">lctP</name>
    <name type="ordered locus">STM3692</name>
</gene>
<feature type="chain" id="PRO_0000210378" description="L-lactate permease">
    <location>
        <begin position="1"/>
        <end position="551"/>
    </location>
</feature>
<feature type="transmembrane region" description="Helical" evidence="2">
    <location>
        <begin position="13"/>
        <end position="33"/>
    </location>
</feature>
<feature type="transmembrane region" description="Helical" evidence="2">
    <location>
        <begin position="37"/>
        <end position="57"/>
    </location>
</feature>
<feature type="transmembrane region" description="Helical" evidence="2">
    <location>
        <begin position="69"/>
        <end position="89"/>
    </location>
</feature>
<feature type="transmembrane region" description="Helical" evidence="2">
    <location>
        <begin position="131"/>
        <end position="151"/>
    </location>
</feature>
<feature type="transmembrane region" description="Helical" evidence="2">
    <location>
        <begin position="159"/>
        <end position="179"/>
    </location>
</feature>
<feature type="transmembrane region" description="Helical" evidence="2">
    <location>
        <begin position="194"/>
        <end position="214"/>
    </location>
</feature>
<feature type="transmembrane region" description="Helical" evidence="2">
    <location>
        <begin position="244"/>
        <end position="264"/>
    </location>
</feature>
<feature type="transmembrane region" description="Helical" evidence="2">
    <location>
        <begin position="306"/>
        <end position="326"/>
    </location>
</feature>
<feature type="transmembrane region" description="Helical" evidence="2">
    <location>
        <begin position="366"/>
        <end position="386"/>
    </location>
</feature>
<feature type="transmembrane region" description="Helical" evidence="2">
    <location>
        <begin position="405"/>
        <end position="425"/>
    </location>
</feature>
<feature type="transmembrane region" description="Helical" evidence="2">
    <location>
        <begin position="438"/>
        <end position="458"/>
    </location>
</feature>
<feature type="transmembrane region" description="Helical" evidence="2">
    <location>
        <begin position="530"/>
        <end position="550"/>
    </location>
</feature>
<dbReference type="EMBL" id="AE006468">
    <property type="protein sequence ID" value="AAL22551.1"/>
    <property type="molecule type" value="Genomic_DNA"/>
</dbReference>
<dbReference type="RefSeq" id="NP_462592.1">
    <property type="nucleotide sequence ID" value="NC_003197.2"/>
</dbReference>
<dbReference type="RefSeq" id="WP_001055305.1">
    <property type="nucleotide sequence ID" value="NC_003197.2"/>
</dbReference>
<dbReference type="STRING" id="99287.STM3692"/>
<dbReference type="PaxDb" id="99287-STM3692"/>
<dbReference type="GeneID" id="1255216"/>
<dbReference type="KEGG" id="stm:STM3692"/>
<dbReference type="PATRIC" id="fig|99287.12.peg.3905"/>
<dbReference type="HOGENOM" id="CLU_021628_0_0_6"/>
<dbReference type="OMA" id="VIVLWIQ"/>
<dbReference type="PhylomeDB" id="Q8ZL63"/>
<dbReference type="BioCyc" id="SENT99287:STM3692-MONOMER"/>
<dbReference type="Proteomes" id="UP000001014">
    <property type="component" value="Chromosome"/>
</dbReference>
<dbReference type="GO" id="GO:0005886">
    <property type="term" value="C:plasma membrane"/>
    <property type="evidence" value="ECO:0000318"/>
    <property type="project" value="GO_Central"/>
</dbReference>
<dbReference type="GO" id="GO:0015129">
    <property type="term" value="F:lactate transmembrane transporter activity"/>
    <property type="evidence" value="ECO:0007669"/>
    <property type="project" value="InterPro"/>
</dbReference>
<dbReference type="GO" id="GO:0015295">
    <property type="term" value="F:solute:proton symporter activity"/>
    <property type="evidence" value="ECO:0000318"/>
    <property type="project" value="GO_Central"/>
</dbReference>
<dbReference type="InterPro" id="IPR003804">
    <property type="entry name" value="Lactate_perm"/>
</dbReference>
<dbReference type="NCBIfam" id="TIGR00795">
    <property type="entry name" value="lctP"/>
    <property type="match status" value="1"/>
</dbReference>
<dbReference type="NCBIfam" id="NF007740">
    <property type="entry name" value="PRK10420.1"/>
    <property type="match status" value="1"/>
</dbReference>
<dbReference type="PANTHER" id="PTHR30003:SF0">
    <property type="entry name" value="GLYCOLATE PERMEASE GLCA-RELATED"/>
    <property type="match status" value="1"/>
</dbReference>
<dbReference type="PANTHER" id="PTHR30003">
    <property type="entry name" value="L-LACTATE PERMEASE"/>
    <property type="match status" value="1"/>
</dbReference>
<dbReference type="Pfam" id="PF02652">
    <property type="entry name" value="Lactate_perm"/>
    <property type="match status" value="1"/>
</dbReference>
<comment type="function">
    <text evidence="1">Uptake of L-lactate across the membrane (By similarity). Can also transport D-lactate and glycolate (By similarity). Seems to be driven by a proton motive force (By similarity).</text>
</comment>
<comment type="catalytic activity">
    <reaction evidence="1">
        <text>(S)-lactate(in) + H(+)(in) = (S)-lactate(out) + H(+)(out)</text>
        <dbReference type="Rhea" id="RHEA:29415"/>
        <dbReference type="ChEBI" id="CHEBI:15378"/>
        <dbReference type="ChEBI" id="CHEBI:16651"/>
    </reaction>
    <physiologicalReaction direction="right-to-left" evidence="1">
        <dbReference type="Rhea" id="RHEA:29417"/>
    </physiologicalReaction>
</comment>
<comment type="catalytic activity">
    <reaction evidence="1">
        <text>(R)-lactate(in) + H(+)(in) = (R)-lactate(out) + H(+)(out)</text>
        <dbReference type="Rhea" id="RHEA:71791"/>
        <dbReference type="ChEBI" id="CHEBI:15378"/>
        <dbReference type="ChEBI" id="CHEBI:16004"/>
    </reaction>
    <physiologicalReaction direction="right-to-left" evidence="1">
        <dbReference type="Rhea" id="RHEA:71793"/>
    </physiologicalReaction>
</comment>
<comment type="catalytic activity">
    <reaction evidence="1">
        <text>glycolate(in) + H(+)(in) = glycolate(out) + H(+)(out)</text>
        <dbReference type="Rhea" id="RHEA:29411"/>
        <dbReference type="ChEBI" id="CHEBI:15378"/>
        <dbReference type="ChEBI" id="CHEBI:29805"/>
    </reaction>
    <physiologicalReaction direction="right-to-left" evidence="1">
        <dbReference type="Rhea" id="RHEA:29413"/>
    </physiologicalReaction>
</comment>
<comment type="subcellular location">
    <subcellularLocation>
        <location evidence="1">Cell inner membrane</location>
        <topology evidence="2">Multi-pass membrane protein</topology>
    </subcellularLocation>
</comment>
<comment type="similarity">
    <text evidence="3">Belongs to the lactate permease family.</text>
</comment>
<reference key="1">
    <citation type="journal article" date="2001" name="Nature">
        <title>Complete genome sequence of Salmonella enterica serovar Typhimurium LT2.</title>
        <authorList>
            <person name="McClelland M."/>
            <person name="Sanderson K.E."/>
            <person name="Spieth J."/>
            <person name="Clifton S.W."/>
            <person name="Latreille P."/>
            <person name="Courtney L."/>
            <person name="Porwollik S."/>
            <person name="Ali J."/>
            <person name="Dante M."/>
            <person name="Du F."/>
            <person name="Hou S."/>
            <person name="Layman D."/>
            <person name="Leonard S."/>
            <person name="Nguyen C."/>
            <person name="Scott K."/>
            <person name="Holmes A."/>
            <person name="Grewal N."/>
            <person name="Mulvaney E."/>
            <person name="Ryan E."/>
            <person name="Sun H."/>
            <person name="Florea L."/>
            <person name="Miller W."/>
            <person name="Stoneking T."/>
            <person name="Nhan M."/>
            <person name="Waterston R."/>
            <person name="Wilson R.K."/>
        </authorList>
    </citation>
    <scope>NUCLEOTIDE SEQUENCE [LARGE SCALE GENOMIC DNA]</scope>
    <source>
        <strain>LT2 / SGSC1412 / ATCC 700720</strain>
    </source>
</reference>
<protein>
    <recommendedName>
        <fullName evidence="1">L-lactate permease</fullName>
    </recommendedName>
</protein>
<accession>Q8ZL63</accession>
<sequence>MNLWQQNYDPAGNIWLSSLIASLPILFFFFALIKLKLKGYVAASWTVVIALAVALLFYKMPVDHALASVVYGFFYGLWPIAWIIIAAVFVYKISVKTGQFDIIRSSILSITPDQRLQMLIVGFCFGAFLEGAAGFGAPVAITAALLVGLGFNPLYAAGLCLIVNTAPVAFGAMGIPILVAGQVTGLDSFEIGQMVGRQLPFLTIIVLFWIMAIMDGWRGVKETWPAVMVAGGSFAIAQYLSSNFIGPELPDIISSLVSLVCLTLFLKRWQPVRIFRFGDMGASQVDQTLARTRYTTGQIVRAWSPFLFLTATVTLWSVPPFKALFAPGGALYDWVINVPVPYLDKLVARMPPVVHEATAYAAVYKFDWFSATGTAILFAALLSIVWLKMKPSAAIQTFGSTLKELALPIYSIGMVLAFAFISNYSGLSSTLALALAHTGSAFTFFSPFLGWLGVFLTGSDTSSNALFASLQATAAQQIGVSDVLMVAANTTGGVTGKMISPQSIAIACAAVGLVGKESDLFRFTVKHSLIFTCMVGVITTLQAYVLTWMIP</sequence>
<organism>
    <name type="scientific">Salmonella typhimurium (strain LT2 / SGSC1412 / ATCC 700720)</name>
    <dbReference type="NCBI Taxonomy" id="99287"/>
    <lineage>
        <taxon>Bacteria</taxon>
        <taxon>Pseudomonadati</taxon>
        <taxon>Pseudomonadota</taxon>
        <taxon>Gammaproteobacteria</taxon>
        <taxon>Enterobacterales</taxon>
        <taxon>Enterobacteriaceae</taxon>
        <taxon>Salmonella</taxon>
    </lineage>
</organism>
<evidence type="ECO:0000250" key="1">
    <source>
        <dbReference type="UniProtKB" id="P33231"/>
    </source>
</evidence>
<evidence type="ECO:0000255" key="2"/>
<evidence type="ECO:0000305" key="3"/>